<feature type="chain" id="PRO_0000394551" description="Probable nucleoredoxin 3">
    <location>
        <begin position="1"/>
        <end position="392"/>
    </location>
</feature>
<feature type="domain" description="Thioredoxin 1" evidence="1">
    <location>
        <begin position="17"/>
        <end position="171"/>
    </location>
</feature>
<feature type="domain" description="Thioredoxin 2" evidence="1">
    <location>
        <begin position="177"/>
        <end position="326"/>
    </location>
</feature>
<reference key="1">
    <citation type="journal article" date="1999" name="Nature">
        <title>Sequence and analysis of chromosome 4 of the plant Arabidopsis thaliana.</title>
        <authorList>
            <person name="Mayer K.F.X."/>
            <person name="Schueller C."/>
            <person name="Wambutt R."/>
            <person name="Murphy G."/>
            <person name="Volckaert G."/>
            <person name="Pohl T."/>
            <person name="Duesterhoeft A."/>
            <person name="Stiekema W."/>
            <person name="Entian K.-D."/>
            <person name="Terryn N."/>
            <person name="Harris B."/>
            <person name="Ansorge W."/>
            <person name="Brandt P."/>
            <person name="Grivell L.A."/>
            <person name="Rieger M."/>
            <person name="Weichselgartner M."/>
            <person name="de Simone V."/>
            <person name="Obermaier B."/>
            <person name="Mache R."/>
            <person name="Mueller M."/>
            <person name="Kreis M."/>
            <person name="Delseny M."/>
            <person name="Puigdomenech P."/>
            <person name="Watson M."/>
            <person name="Schmidtheini T."/>
            <person name="Reichert B."/>
            <person name="Portetelle D."/>
            <person name="Perez-Alonso M."/>
            <person name="Boutry M."/>
            <person name="Bancroft I."/>
            <person name="Vos P."/>
            <person name="Hoheisel J."/>
            <person name="Zimmermann W."/>
            <person name="Wedler H."/>
            <person name="Ridley P."/>
            <person name="Langham S.-A."/>
            <person name="McCullagh B."/>
            <person name="Bilham L."/>
            <person name="Robben J."/>
            <person name="van der Schueren J."/>
            <person name="Grymonprez B."/>
            <person name="Chuang Y.-J."/>
            <person name="Vandenbussche F."/>
            <person name="Braeken M."/>
            <person name="Weltjens I."/>
            <person name="Voet M."/>
            <person name="Bastiaens I."/>
            <person name="Aert R."/>
            <person name="Defoor E."/>
            <person name="Weitzenegger T."/>
            <person name="Bothe G."/>
            <person name="Ramsperger U."/>
            <person name="Hilbert H."/>
            <person name="Braun M."/>
            <person name="Holzer E."/>
            <person name="Brandt A."/>
            <person name="Peters S."/>
            <person name="van Staveren M."/>
            <person name="Dirkse W."/>
            <person name="Mooijman P."/>
            <person name="Klein Lankhorst R."/>
            <person name="Rose M."/>
            <person name="Hauf J."/>
            <person name="Koetter P."/>
            <person name="Berneiser S."/>
            <person name="Hempel S."/>
            <person name="Feldpausch M."/>
            <person name="Lamberth S."/>
            <person name="Van den Daele H."/>
            <person name="De Keyser A."/>
            <person name="Buysshaert C."/>
            <person name="Gielen J."/>
            <person name="Villarroel R."/>
            <person name="De Clercq R."/>
            <person name="van Montagu M."/>
            <person name="Rogers J."/>
            <person name="Cronin A."/>
            <person name="Quail M.A."/>
            <person name="Bray-Allen S."/>
            <person name="Clark L."/>
            <person name="Doggett J."/>
            <person name="Hall S."/>
            <person name="Kay M."/>
            <person name="Lennard N."/>
            <person name="McLay K."/>
            <person name="Mayes R."/>
            <person name="Pettett A."/>
            <person name="Rajandream M.A."/>
            <person name="Lyne M."/>
            <person name="Benes V."/>
            <person name="Rechmann S."/>
            <person name="Borkova D."/>
            <person name="Bloecker H."/>
            <person name="Scharfe M."/>
            <person name="Grimm M."/>
            <person name="Loehnert T.-H."/>
            <person name="Dose S."/>
            <person name="de Haan M."/>
            <person name="Maarse A.C."/>
            <person name="Schaefer M."/>
            <person name="Mueller-Auer S."/>
            <person name="Gabel C."/>
            <person name="Fuchs M."/>
            <person name="Fartmann B."/>
            <person name="Granderath K."/>
            <person name="Dauner D."/>
            <person name="Herzl A."/>
            <person name="Neumann S."/>
            <person name="Argiriou A."/>
            <person name="Vitale D."/>
            <person name="Liguori R."/>
            <person name="Piravandi E."/>
            <person name="Massenet O."/>
            <person name="Quigley F."/>
            <person name="Clabauld G."/>
            <person name="Muendlein A."/>
            <person name="Felber R."/>
            <person name="Schnabl S."/>
            <person name="Hiller R."/>
            <person name="Schmidt W."/>
            <person name="Lecharny A."/>
            <person name="Aubourg S."/>
            <person name="Chefdor F."/>
            <person name="Cooke R."/>
            <person name="Berger C."/>
            <person name="Monfort A."/>
            <person name="Casacuberta E."/>
            <person name="Gibbons T."/>
            <person name="Weber N."/>
            <person name="Vandenbol M."/>
            <person name="Bargues M."/>
            <person name="Terol J."/>
            <person name="Torres A."/>
            <person name="Perez-Perez A."/>
            <person name="Purnelle B."/>
            <person name="Bent E."/>
            <person name="Johnson S."/>
            <person name="Tacon D."/>
            <person name="Jesse T."/>
            <person name="Heijnen L."/>
            <person name="Schwarz S."/>
            <person name="Scholler P."/>
            <person name="Heber S."/>
            <person name="Francs P."/>
            <person name="Bielke C."/>
            <person name="Frishman D."/>
            <person name="Haase D."/>
            <person name="Lemcke K."/>
            <person name="Mewes H.-W."/>
            <person name="Stocker S."/>
            <person name="Zaccaria P."/>
            <person name="Bevan M."/>
            <person name="Wilson R.K."/>
            <person name="de la Bastide M."/>
            <person name="Habermann K."/>
            <person name="Parnell L."/>
            <person name="Dedhia N."/>
            <person name="Gnoj L."/>
            <person name="Schutz K."/>
            <person name="Huang E."/>
            <person name="Spiegel L."/>
            <person name="Sekhon M."/>
            <person name="Murray J."/>
            <person name="Sheet P."/>
            <person name="Cordes M."/>
            <person name="Abu-Threideh J."/>
            <person name="Stoneking T."/>
            <person name="Kalicki J."/>
            <person name="Graves T."/>
            <person name="Harmon G."/>
            <person name="Edwards J."/>
            <person name="Latreille P."/>
            <person name="Courtney L."/>
            <person name="Cloud J."/>
            <person name="Abbott A."/>
            <person name="Scott K."/>
            <person name="Johnson D."/>
            <person name="Minx P."/>
            <person name="Bentley D."/>
            <person name="Fulton B."/>
            <person name="Miller N."/>
            <person name="Greco T."/>
            <person name="Kemp K."/>
            <person name="Kramer J."/>
            <person name="Fulton L."/>
            <person name="Mardis E."/>
            <person name="Dante M."/>
            <person name="Pepin K."/>
            <person name="Hillier L.W."/>
            <person name="Nelson J."/>
            <person name="Spieth J."/>
            <person name="Ryan E."/>
            <person name="Andrews S."/>
            <person name="Geisel C."/>
            <person name="Layman D."/>
            <person name="Du H."/>
            <person name="Ali J."/>
            <person name="Berghoff A."/>
            <person name="Jones K."/>
            <person name="Drone K."/>
            <person name="Cotton M."/>
            <person name="Joshu C."/>
            <person name="Antonoiu B."/>
            <person name="Zidanic M."/>
            <person name="Strong C."/>
            <person name="Sun H."/>
            <person name="Lamar B."/>
            <person name="Yordan C."/>
            <person name="Ma P."/>
            <person name="Zhong J."/>
            <person name="Preston R."/>
            <person name="Vil D."/>
            <person name="Shekher M."/>
            <person name="Matero A."/>
            <person name="Shah R."/>
            <person name="Swaby I.K."/>
            <person name="O'Shaughnessy A."/>
            <person name="Rodriguez M."/>
            <person name="Hoffman J."/>
            <person name="Till S."/>
            <person name="Granat S."/>
            <person name="Shohdy N."/>
            <person name="Hasegawa A."/>
            <person name="Hameed A."/>
            <person name="Lodhi M."/>
            <person name="Johnson A."/>
            <person name="Chen E."/>
            <person name="Marra M.A."/>
            <person name="Martienssen R."/>
            <person name="McCombie W.R."/>
        </authorList>
    </citation>
    <scope>NUCLEOTIDE SEQUENCE [LARGE SCALE GENOMIC DNA]</scope>
    <source>
        <strain>cv. Columbia</strain>
    </source>
</reference>
<reference key="2">
    <citation type="journal article" date="2017" name="Plant J.">
        <title>Araport11: a complete reannotation of the Arabidopsis thaliana reference genome.</title>
        <authorList>
            <person name="Cheng C.Y."/>
            <person name="Krishnakumar V."/>
            <person name="Chan A.P."/>
            <person name="Thibaud-Nissen F."/>
            <person name="Schobel S."/>
            <person name="Town C.D."/>
        </authorList>
    </citation>
    <scope>GENOME REANNOTATION</scope>
    <source>
        <strain>cv. Columbia</strain>
    </source>
</reference>
<reference key="3">
    <citation type="journal article" date="2003" name="Science">
        <title>Empirical analysis of transcriptional activity in the Arabidopsis genome.</title>
        <authorList>
            <person name="Yamada K."/>
            <person name="Lim J."/>
            <person name="Dale J.M."/>
            <person name="Chen H."/>
            <person name="Shinn P."/>
            <person name="Palm C.J."/>
            <person name="Southwick A.M."/>
            <person name="Wu H.C."/>
            <person name="Kim C.J."/>
            <person name="Nguyen M."/>
            <person name="Pham P.K."/>
            <person name="Cheuk R.F."/>
            <person name="Karlin-Newmann G."/>
            <person name="Liu S.X."/>
            <person name="Lam B."/>
            <person name="Sakano H."/>
            <person name="Wu T."/>
            <person name="Yu G."/>
            <person name="Miranda M."/>
            <person name="Quach H.L."/>
            <person name="Tripp M."/>
            <person name="Chang C.H."/>
            <person name="Lee J.M."/>
            <person name="Toriumi M.J."/>
            <person name="Chan M.M."/>
            <person name="Tang C.C."/>
            <person name="Onodera C.S."/>
            <person name="Deng J.M."/>
            <person name="Akiyama K."/>
            <person name="Ansari Y."/>
            <person name="Arakawa T."/>
            <person name="Banh J."/>
            <person name="Banno F."/>
            <person name="Bowser L."/>
            <person name="Brooks S.Y."/>
            <person name="Carninci P."/>
            <person name="Chao Q."/>
            <person name="Choy N."/>
            <person name="Enju A."/>
            <person name="Goldsmith A.D."/>
            <person name="Gurjal M."/>
            <person name="Hansen N.F."/>
            <person name="Hayashizaki Y."/>
            <person name="Johnson-Hopson C."/>
            <person name="Hsuan V.W."/>
            <person name="Iida K."/>
            <person name="Karnes M."/>
            <person name="Khan S."/>
            <person name="Koesema E."/>
            <person name="Ishida J."/>
            <person name="Jiang P.X."/>
            <person name="Jones T."/>
            <person name="Kawai J."/>
            <person name="Kamiya A."/>
            <person name="Meyers C."/>
            <person name="Nakajima M."/>
            <person name="Narusaka M."/>
            <person name="Seki M."/>
            <person name="Sakurai T."/>
            <person name="Satou M."/>
            <person name="Tamse R."/>
            <person name="Vaysberg M."/>
            <person name="Wallender E.K."/>
            <person name="Wong C."/>
            <person name="Yamamura Y."/>
            <person name="Yuan S."/>
            <person name="Shinozaki K."/>
            <person name="Davis R.W."/>
            <person name="Theologis A."/>
            <person name="Ecker J.R."/>
        </authorList>
    </citation>
    <scope>NUCLEOTIDE SEQUENCE [LARGE SCALE MRNA]</scope>
    <source>
        <strain>cv. Columbia</strain>
    </source>
</reference>
<reference key="4">
    <citation type="journal article" date="2009" name="Mol. Plant">
        <title>Comparative genomic study of the thioredoxin family in photosynthetic organisms with emphasis on Populus trichocarpa.</title>
        <authorList>
            <person name="Chibani K."/>
            <person name="Wingsle G."/>
            <person name="Jacquot J.P."/>
            <person name="Gelhaye E."/>
            <person name="Rouhier N."/>
        </authorList>
    </citation>
    <scope>GENE FAMILY</scope>
    <scope>NOMENCLATURE</scope>
</reference>
<gene>
    <name type="ordered locus">At4g31240</name>
    <name type="ORF">F8F16.60</name>
</gene>
<dbReference type="EC" id="1.8.1.8"/>
<dbReference type="EMBL" id="AL021633">
    <property type="protein sequence ID" value="CAA16527.1"/>
    <property type="molecule type" value="Genomic_DNA"/>
</dbReference>
<dbReference type="EMBL" id="AL161578">
    <property type="protein sequence ID" value="CAB79842.1"/>
    <property type="molecule type" value="Genomic_DNA"/>
</dbReference>
<dbReference type="EMBL" id="CP002687">
    <property type="protein sequence ID" value="AEE85880.1"/>
    <property type="molecule type" value="Genomic_DNA"/>
</dbReference>
<dbReference type="EMBL" id="CP002687">
    <property type="protein sequence ID" value="AEE85881.1"/>
    <property type="molecule type" value="Genomic_DNA"/>
</dbReference>
<dbReference type="EMBL" id="AY063945">
    <property type="protein sequence ID" value="AAL36301.1"/>
    <property type="molecule type" value="mRNA"/>
</dbReference>
<dbReference type="EMBL" id="AY096637">
    <property type="protein sequence ID" value="AAM20287.1"/>
    <property type="molecule type" value="mRNA"/>
</dbReference>
<dbReference type="PIR" id="T04491">
    <property type="entry name" value="T04491"/>
</dbReference>
<dbReference type="RefSeq" id="NP_001320100.1">
    <property type="nucleotide sequence ID" value="NM_001342068.1"/>
</dbReference>
<dbReference type="RefSeq" id="NP_567869.1">
    <property type="nucleotide sequence ID" value="NM_119273.3"/>
</dbReference>
<dbReference type="SMR" id="Q8VZQ0"/>
<dbReference type="FunCoup" id="Q8VZQ0">
    <property type="interactions" value="20"/>
</dbReference>
<dbReference type="STRING" id="3702.Q8VZQ0"/>
<dbReference type="PaxDb" id="3702-AT4G31240.1"/>
<dbReference type="ProteomicsDB" id="250610"/>
<dbReference type="EnsemblPlants" id="AT4G31240.1">
    <property type="protein sequence ID" value="AT4G31240.1"/>
    <property type="gene ID" value="AT4G31240"/>
</dbReference>
<dbReference type="EnsemblPlants" id="AT4G31240.2">
    <property type="protein sequence ID" value="AT4G31240.2"/>
    <property type="gene ID" value="AT4G31240"/>
</dbReference>
<dbReference type="GeneID" id="829251"/>
<dbReference type="Gramene" id="AT4G31240.1">
    <property type="protein sequence ID" value="AT4G31240.1"/>
    <property type="gene ID" value="AT4G31240"/>
</dbReference>
<dbReference type="Gramene" id="AT4G31240.2">
    <property type="protein sequence ID" value="AT4G31240.2"/>
    <property type="gene ID" value="AT4G31240"/>
</dbReference>
<dbReference type="KEGG" id="ath:AT4G31240"/>
<dbReference type="Araport" id="AT4G31240"/>
<dbReference type="TAIR" id="AT4G31240">
    <property type="gene designation" value="NRX2"/>
</dbReference>
<dbReference type="eggNOG" id="KOG2501">
    <property type="taxonomic scope" value="Eukaryota"/>
</dbReference>
<dbReference type="HOGENOM" id="CLU_019626_0_2_1"/>
<dbReference type="InParanoid" id="Q8VZQ0"/>
<dbReference type="OMA" id="NAPCRQF"/>
<dbReference type="OrthoDB" id="409136at2759"/>
<dbReference type="PhylomeDB" id="Q8VZQ0"/>
<dbReference type="PRO" id="PR:Q8VZQ0"/>
<dbReference type="Proteomes" id="UP000006548">
    <property type="component" value="Chromosome 4"/>
</dbReference>
<dbReference type="ExpressionAtlas" id="Q8VZQ0">
    <property type="expression patterns" value="baseline and differential"/>
</dbReference>
<dbReference type="GO" id="GO:0004791">
    <property type="term" value="F:thioredoxin-disulfide reductase (NADPH) activity"/>
    <property type="evidence" value="ECO:0007669"/>
    <property type="project" value="InterPro"/>
</dbReference>
<dbReference type="CDD" id="cd03009">
    <property type="entry name" value="TryX_like_TryX_NRX"/>
    <property type="match status" value="2"/>
</dbReference>
<dbReference type="Gene3D" id="3.40.30.10">
    <property type="entry name" value="Glutaredoxin"/>
    <property type="match status" value="2"/>
</dbReference>
<dbReference type="InterPro" id="IPR046349">
    <property type="entry name" value="C1-like_sf"/>
</dbReference>
<dbReference type="InterPro" id="IPR004146">
    <property type="entry name" value="DC1"/>
</dbReference>
<dbReference type="InterPro" id="IPR052259">
    <property type="entry name" value="Nucleoredoxin-like"/>
</dbReference>
<dbReference type="InterPro" id="IPR012336">
    <property type="entry name" value="Thioredoxin-like_fold"/>
</dbReference>
<dbReference type="InterPro" id="IPR036249">
    <property type="entry name" value="Thioredoxin-like_sf"/>
</dbReference>
<dbReference type="InterPro" id="IPR013766">
    <property type="entry name" value="Thioredoxin_domain"/>
</dbReference>
<dbReference type="InterPro" id="IPR045870">
    <property type="entry name" value="TryX_NRX_thioredoxin_dom"/>
</dbReference>
<dbReference type="PANTHER" id="PTHR13871:SF81">
    <property type="entry name" value="NUCLEOREDOXIN 3-RELATED"/>
    <property type="match status" value="1"/>
</dbReference>
<dbReference type="PANTHER" id="PTHR13871">
    <property type="entry name" value="THIOREDOXIN"/>
    <property type="match status" value="1"/>
</dbReference>
<dbReference type="Pfam" id="PF03107">
    <property type="entry name" value="C1_2"/>
    <property type="match status" value="1"/>
</dbReference>
<dbReference type="Pfam" id="PF13905">
    <property type="entry name" value="Thioredoxin_8"/>
    <property type="match status" value="2"/>
</dbReference>
<dbReference type="SUPFAM" id="SSF57889">
    <property type="entry name" value="Cysteine-rich domain"/>
    <property type="match status" value="1"/>
</dbReference>
<dbReference type="SUPFAM" id="SSF52833">
    <property type="entry name" value="Thioredoxin-like"/>
    <property type="match status" value="2"/>
</dbReference>
<dbReference type="PROSITE" id="PS51352">
    <property type="entry name" value="THIOREDOXIN_2"/>
    <property type="match status" value="1"/>
</dbReference>
<comment type="function">
    <text>Probable thiol-disulfide oxidoreductase that may participate in various redox reactions.</text>
</comment>
<comment type="catalytic activity">
    <reaction>
        <text>[protein]-dithiol + NAD(+) = [protein]-disulfide + NADH + H(+)</text>
        <dbReference type="Rhea" id="RHEA:18749"/>
        <dbReference type="Rhea" id="RHEA-COMP:10593"/>
        <dbReference type="Rhea" id="RHEA-COMP:10594"/>
        <dbReference type="ChEBI" id="CHEBI:15378"/>
        <dbReference type="ChEBI" id="CHEBI:29950"/>
        <dbReference type="ChEBI" id="CHEBI:50058"/>
        <dbReference type="ChEBI" id="CHEBI:57540"/>
        <dbReference type="ChEBI" id="CHEBI:57945"/>
        <dbReference type="EC" id="1.8.1.8"/>
    </reaction>
</comment>
<comment type="catalytic activity">
    <reaction>
        <text>[protein]-dithiol + NADP(+) = [protein]-disulfide + NADPH + H(+)</text>
        <dbReference type="Rhea" id="RHEA:18753"/>
        <dbReference type="Rhea" id="RHEA-COMP:10593"/>
        <dbReference type="Rhea" id="RHEA-COMP:10594"/>
        <dbReference type="ChEBI" id="CHEBI:15378"/>
        <dbReference type="ChEBI" id="CHEBI:29950"/>
        <dbReference type="ChEBI" id="CHEBI:50058"/>
        <dbReference type="ChEBI" id="CHEBI:57783"/>
        <dbReference type="ChEBI" id="CHEBI:58349"/>
        <dbReference type="EC" id="1.8.1.8"/>
    </reaction>
</comment>
<comment type="similarity">
    <text evidence="2">Belongs to the nucleoredoxin family.</text>
</comment>
<evidence type="ECO:0000255" key="1">
    <source>
        <dbReference type="PROSITE-ProRule" id="PRU00691"/>
    </source>
</evidence>
<evidence type="ECO:0000305" key="2"/>
<protein>
    <recommendedName>
        <fullName>Probable nucleoredoxin 3</fullName>
        <shortName>AtNrx3</shortName>
        <ecNumber>1.8.1.8</ecNumber>
    </recommendedName>
</protein>
<name>NRX3_ARATH</name>
<organism>
    <name type="scientific">Arabidopsis thaliana</name>
    <name type="common">Mouse-ear cress</name>
    <dbReference type="NCBI Taxonomy" id="3702"/>
    <lineage>
        <taxon>Eukaryota</taxon>
        <taxon>Viridiplantae</taxon>
        <taxon>Streptophyta</taxon>
        <taxon>Embryophyta</taxon>
        <taxon>Tracheophyta</taxon>
        <taxon>Spermatophyta</taxon>
        <taxon>Magnoliopsida</taxon>
        <taxon>eudicotyledons</taxon>
        <taxon>Gunneridae</taxon>
        <taxon>Pentapetalae</taxon>
        <taxon>rosids</taxon>
        <taxon>malvids</taxon>
        <taxon>Brassicales</taxon>
        <taxon>Brassicaceae</taxon>
        <taxon>Camelineae</taxon>
        <taxon>Arabidopsis</taxon>
    </lineage>
</organism>
<accession>Q8VZQ0</accession>
<accession>O49574</accession>
<sequence length="392" mass="44963">MAVSADYQVKFPESGDLYSILAAEGIEFLLSHSGEVPLEYIHGKTICLFFSAIWCRPCKDFTPELIKLYENLQNRGEELEIIFVSFDHDMTSFYEHFWCMPWLAVPFNLSLLNKLRDKYGISRIPSLVPLYSDEISVAEDVIGLIEDYGSEAFPFTKKRKEELKAIDDSKRLGGQLEKLLTHESRNYVVARNGSKVLVSKLVGKTIGLYFGAHWCPPFRSFTSQLVDVYNELATTDKGSFEVILISTDRDSREFNINMTNMPWLAIPYEDRTRQDLCRIFNVKLIPALVIIGPEEKTVTTNAREMVSLYGSRSFPFTESRIVELKACLKKEGDSLPRKVKDNKHEHELKLDMAKAYVCDFCKKQGRFWAFSCNACDYDLHPTCVEEEEALLV</sequence>
<proteinExistence type="evidence at transcript level"/>
<keyword id="KW-0520">NAD</keyword>
<keyword id="KW-0560">Oxidoreductase</keyword>
<keyword id="KW-1185">Reference proteome</keyword>
<keyword id="KW-0677">Repeat</keyword>